<protein>
    <recommendedName>
        <fullName evidence="1">Large ribosomal subunit protein bL17</fullName>
    </recommendedName>
    <alternativeName>
        <fullName evidence="2">50S ribosomal protein L17</fullName>
    </alternativeName>
</protein>
<gene>
    <name evidence="1" type="primary">rplQ</name>
    <name type="ordered locus">Msil_2992</name>
</gene>
<sequence length="142" mass="15805">MYHGNAHRRFGRTHEHRKAMFANMCQALIKHEQIVTTLPKAKDLRPVVEKLVTLGKRGDLHARRQAIAQIKDVALVGKLFAVLGPRYKERHGGYTRVLKAGFRYGDNAPMAVIEFVDRDVDAKGKDSGPVFGADQDEAALAS</sequence>
<reference key="1">
    <citation type="journal article" date="2010" name="J. Bacteriol.">
        <title>Complete genome sequence of the aerobic facultative methanotroph Methylocella silvestris BL2.</title>
        <authorList>
            <person name="Chen Y."/>
            <person name="Crombie A."/>
            <person name="Rahman M.T."/>
            <person name="Dedysh S.N."/>
            <person name="Liesack W."/>
            <person name="Stott M.B."/>
            <person name="Alam M."/>
            <person name="Theisen A.R."/>
            <person name="Murrell J.C."/>
            <person name="Dunfield P.F."/>
        </authorList>
    </citation>
    <scope>NUCLEOTIDE SEQUENCE [LARGE SCALE GENOMIC DNA]</scope>
    <source>
        <strain>DSM 15510 / CIP 108128 / LMG 27833 / NCIMB 13906 / BL2</strain>
    </source>
</reference>
<name>RL17_METSB</name>
<organism>
    <name type="scientific">Methylocella silvestris (strain DSM 15510 / CIP 108128 / LMG 27833 / NCIMB 13906 / BL2)</name>
    <dbReference type="NCBI Taxonomy" id="395965"/>
    <lineage>
        <taxon>Bacteria</taxon>
        <taxon>Pseudomonadati</taxon>
        <taxon>Pseudomonadota</taxon>
        <taxon>Alphaproteobacteria</taxon>
        <taxon>Hyphomicrobiales</taxon>
        <taxon>Beijerinckiaceae</taxon>
        <taxon>Methylocella</taxon>
    </lineage>
</organism>
<dbReference type="EMBL" id="CP001280">
    <property type="protein sequence ID" value="ACK51903.1"/>
    <property type="molecule type" value="Genomic_DNA"/>
</dbReference>
<dbReference type="RefSeq" id="WP_012591972.1">
    <property type="nucleotide sequence ID" value="NC_011666.1"/>
</dbReference>
<dbReference type="SMR" id="B8EIT6"/>
<dbReference type="STRING" id="395965.Msil_2992"/>
<dbReference type="KEGG" id="msl:Msil_2992"/>
<dbReference type="eggNOG" id="COG0203">
    <property type="taxonomic scope" value="Bacteria"/>
</dbReference>
<dbReference type="HOGENOM" id="CLU_074407_2_2_5"/>
<dbReference type="OrthoDB" id="9809073at2"/>
<dbReference type="Proteomes" id="UP000002257">
    <property type="component" value="Chromosome"/>
</dbReference>
<dbReference type="GO" id="GO:0022625">
    <property type="term" value="C:cytosolic large ribosomal subunit"/>
    <property type="evidence" value="ECO:0007669"/>
    <property type="project" value="TreeGrafter"/>
</dbReference>
<dbReference type="GO" id="GO:0003735">
    <property type="term" value="F:structural constituent of ribosome"/>
    <property type="evidence" value="ECO:0007669"/>
    <property type="project" value="InterPro"/>
</dbReference>
<dbReference type="GO" id="GO:0006412">
    <property type="term" value="P:translation"/>
    <property type="evidence" value="ECO:0007669"/>
    <property type="project" value="UniProtKB-UniRule"/>
</dbReference>
<dbReference type="FunFam" id="3.90.1030.10:FF:000001">
    <property type="entry name" value="50S ribosomal protein L17"/>
    <property type="match status" value="1"/>
</dbReference>
<dbReference type="Gene3D" id="3.90.1030.10">
    <property type="entry name" value="Ribosomal protein L17"/>
    <property type="match status" value="1"/>
</dbReference>
<dbReference type="HAMAP" id="MF_01368">
    <property type="entry name" value="Ribosomal_bL17"/>
    <property type="match status" value="1"/>
</dbReference>
<dbReference type="InterPro" id="IPR000456">
    <property type="entry name" value="Ribosomal_bL17"/>
</dbReference>
<dbReference type="InterPro" id="IPR047859">
    <property type="entry name" value="Ribosomal_bL17_CS"/>
</dbReference>
<dbReference type="InterPro" id="IPR036373">
    <property type="entry name" value="Ribosomal_bL17_sf"/>
</dbReference>
<dbReference type="NCBIfam" id="TIGR00059">
    <property type="entry name" value="L17"/>
    <property type="match status" value="1"/>
</dbReference>
<dbReference type="PANTHER" id="PTHR14413:SF16">
    <property type="entry name" value="LARGE RIBOSOMAL SUBUNIT PROTEIN BL17M"/>
    <property type="match status" value="1"/>
</dbReference>
<dbReference type="PANTHER" id="PTHR14413">
    <property type="entry name" value="RIBOSOMAL PROTEIN L17"/>
    <property type="match status" value="1"/>
</dbReference>
<dbReference type="Pfam" id="PF01196">
    <property type="entry name" value="Ribosomal_L17"/>
    <property type="match status" value="1"/>
</dbReference>
<dbReference type="SUPFAM" id="SSF64263">
    <property type="entry name" value="Prokaryotic ribosomal protein L17"/>
    <property type="match status" value="1"/>
</dbReference>
<dbReference type="PROSITE" id="PS01167">
    <property type="entry name" value="RIBOSOMAL_L17"/>
    <property type="match status" value="1"/>
</dbReference>
<evidence type="ECO:0000255" key="1">
    <source>
        <dbReference type="HAMAP-Rule" id="MF_01368"/>
    </source>
</evidence>
<evidence type="ECO:0000305" key="2"/>
<feature type="chain" id="PRO_1000184032" description="Large ribosomal subunit protein bL17">
    <location>
        <begin position="1"/>
        <end position="142"/>
    </location>
</feature>
<keyword id="KW-1185">Reference proteome</keyword>
<keyword id="KW-0687">Ribonucleoprotein</keyword>
<keyword id="KW-0689">Ribosomal protein</keyword>
<accession>B8EIT6</accession>
<proteinExistence type="inferred from homology"/>
<comment type="subunit">
    <text evidence="1">Part of the 50S ribosomal subunit. Contacts protein L32.</text>
</comment>
<comment type="similarity">
    <text evidence="1">Belongs to the bacterial ribosomal protein bL17 family.</text>
</comment>